<evidence type="ECO:0000255" key="1">
    <source>
        <dbReference type="HAMAP-Rule" id="MF_00184"/>
    </source>
</evidence>
<evidence type="ECO:0000255" key="2">
    <source>
        <dbReference type="PROSITE-ProRule" id="PRU01228"/>
    </source>
</evidence>
<feature type="chain" id="PRO_1000199520" description="Threonine--tRNA ligase">
    <location>
        <begin position="1"/>
        <end position="640"/>
    </location>
</feature>
<feature type="domain" description="TGS" evidence="2">
    <location>
        <begin position="1"/>
        <end position="61"/>
    </location>
</feature>
<feature type="region of interest" description="Catalytic" evidence="1">
    <location>
        <begin position="242"/>
        <end position="533"/>
    </location>
</feature>
<feature type="binding site" evidence="1">
    <location>
        <position position="333"/>
    </location>
    <ligand>
        <name>Zn(2+)</name>
        <dbReference type="ChEBI" id="CHEBI:29105"/>
    </ligand>
</feature>
<feature type="binding site" evidence="1">
    <location>
        <position position="384"/>
    </location>
    <ligand>
        <name>Zn(2+)</name>
        <dbReference type="ChEBI" id="CHEBI:29105"/>
    </ligand>
</feature>
<feature type="binding site" evidence="1">
    <location>
        <position position="510"/>
    </location>
    <ligand>
        <name>Zn(2+)</name>
        <dbReference type="ChEBI" id="CHEBI:29105"/>
    </ligand>
</feature>
<accession>B7I688</accession>
<sequence>MPIITLPNGDQKSFDHPVSVMEVAQSIGPGLAKNTVAGRVNDRLVDACDLITEDSTLQIITPKDEEGLEIIRHSCAHLVGHAVKQLFPEAKMVIGPVIEEGFYYDIWMPRPFTLDDMAAIEERMKKLIDQDYDVIKKMTPRDEVIKVFTDRGEEYKLRLVEDMPEEKAMGLYYHQEYVDMCRGPHVPNTKFLKSFKLTKISGAYWRGDAKNEQLQRIYGTAWADKKQLAAYIKRIEEAEKRDHRKIGKALDLFHMQEEAPGMVFWHANGWTIYQVLEQYMRKVQQDNGYQEIKTPQIVDFTLWEKSGHAANYVENMFTTHSESRNYAVKPMNCPCHVQVFNQGLKSYRDLPIRLAEFGSCHRNEPSGSLHGIMRVRGFTQDDAHIFCTKEQIGKEVADFIKLTLDVYKDFGFEEVQMKLSTRPEKRVGDDALWDLAEKSLADALDAAGLEWELQPGEGAFYGPKIEFSLKDCLGRVWQCGTIQCDFNLPVRLDASYVTEENERDQPVMLHRAILGSFERFIGILIEHYAGFMPPWLSPVQACVMNITDSQAEASEQVVAKLKENGLRAISDLRNEKIGFKIRERTLERIPYLLVLGDREVEEGTVNVRTRSGKNLGTMSVDAFIDLVKSAVAERGRYIVE</sequence>
<protein>
    <recommendedName>
        <fullName evidence="1">Threonine--tRNA ligase</fullName>
        <ecNumber evidence="1">6.1.1.3</ecNumber>
    </recommendedName>
    <alternativeName>
        <fullName evidence="1">Threonyl-tRNA synthetase</fullName>
        <shortName evidence="1">ThrRS</shortName>
    </alternativeName>
</protein>
<proteinExistence type="inferred from homology"/>
<dbReference type="EC" id="6.1.1.3" evidence="1"/>
<dbReference type="EMBL" id="CP001182">
    <property type="protein sequence ID" value="ACJ40115.1"/>
    <property type="molecule type" value="Genomic_DNA"/>
</dbReference>
<dbReference type="RefSeq" id="WP_001121794.1">
    <property type="nucleotide sequence ID" value="NC_011586.2"/>
</dbReference>
<dbReference type="SMR" id="B7I688"/>
<dbReference type="KEGG" id="abn:AB57_0695"/>
<dbReference type="HOGENOM" id="CLU_008554_0_1_6"/>
<dbReference type="Proteomes" id="UP000007094">
    <property type="component" value="Chromosome"/>
</dbReference>
<dbReference type="GO" id="GO:0005829">
    <property type="term" value="C:cytosol"/>
    <property type="evidence" value="ECO:0007669"/>
    <property type="project" value="TreeGrafter"/>
</dbReference>
<dbReference type="GO" id="GO:0005524">
    <property type="term" value="F:ATP binding"/>
    <property type="evidence" value="ECO:0007669"/>
    <property type="project" value="UniProtKB-UniRule"/>
</dbReference>
<dbReference type="GO" id="GO:0046872">
    <property type="term" value="F:metal ion binding"/>
    <property type="evidence" value="ECO:0007669"/>
    <property type="project" value="UniProtKB-KW"/>
</dbReference>
<dbReference type="GO" id="GO:0004829">
    <property type="term" value="F:threonine-tRNA ligase activity"/>
    <property type="evidence" value="ECO:0007669"/>
    <property type="project" value="UniProtKB-UniRule"/>
</dbReference>
<dbReference type="GO" id="GO:0000049">
    <property type="term" value="F:tRNA binding"/>
    <property type="evidence" value="ECO:0007669"/>
    <property type="project" value="UniProtKB-KW"/>
</dbReference>
<dbReference type="GO" id="GO:0006435">
    <property type="term" value="P:threonyl-tRNA aminoacylation"/>
    <property type="evidence" value="ECO:0007669"/>
    <property type="project" value="UniProtKB-UniRule"/>
</dbReference>
<dbReference type="CDD" id="cd01667">
    <property type="entry name" value="TGS_ThrRS"/>
    <property type="match status" value="1"/>
</dbReference>
<dbReference type="CDD" id="cd00860">
    <property type="entry name" value="ThrRS_anticodon"/>
    <property type="match status" value="1"/>
</dbReference>
<dbReference type="CDD" id="cd00771">
    <property type="entry name" value="ThrRS_core"/>
    <property type="match status" value="1"/>
</dbReference>
<dbReference type="FunFam" id="3.10.20.30:FF:000005">
    <property type="entry name" value="Threonine--tRNA ligase"/>
    <property type="match status" value="1"/>
</dbReference>
<dbReference type="FunFam" id="3.30.54.20:FF:000002">
    <property type="entry name" value="Threonine--tRNA ligase"/>
    <property type="match status" value="1"/>
</dbReference>
<dbReference type="FunFam" id="3.30.930.10:FF:000002">
    <property type="entry name" value="Threonine--tRNA ligase"/>
    <property type="match status" value="1"/>
</dbReference>
<dbReference type="FunFam" id="3.40.50.800:FF:000001">
    <property type="entry name" value="Threonine--tRNA ligase"/>
    <property type="match status" value="1"/>
</dbReference>
<dbReference type="FunFam" id="3.30.980.10:FF:000005">
    <property type="entry name" value="Threonyl-tRNA synthetase, mitochondrial"/>
    <property type="match status" value="1"/>
</dbReference>
<dbReference type="Gene3D" id="3.10.20.30">
    <property type="match status" value="1"/>
</dbReference>
<dbReference type="Gene3D" id="3.30.54.20">
    <property type="match status" value="1"/>
</dbReference>
<dbReference type="Gene3D" id="3.40.50.800">
    <property type="entry name" value="Anticodon-binding domain"/>
    <property type="match status" value="1"/>
</dbReference>
<dbReference type="Gene3D" id="3.30.930.10">
    <property type="entry name" value="Bira Bifunctional Protein, Domain 2"/>
    <property type="match status" value="1"/>
</dbReference>
<dbReference type="Gene3D" id="3.30.980.10">
    <property type="entry name" value="Threonyl-trna Synthetase, Chain A, domain 2"/>
    <property type="match status" value="1"/>
</dbReference>
<dbReference type="HAMAP" id="MF_00184">
    <property type="entry name" value="Thr_tRNA_synth"/>
    <property type="match status" value="1"/>
</dbReference>
<dbReference type="InterPro" id="IPR002314">
    <property type="entry name" value="aa-tRNA-synt_IIb"/>
</dbReference>
<dbReference type="InterPro" id="IPR006195">
    <property type="entry name" value="aa-tRNA-synth_II"/>
</dbReference>
<dbReference type="InterPro" id="IPR045864">
    <property type="entry name" value="aa-tRNA-synth_II/BPL/LPL"/>
</dbReference>
<dbReference type="InterPro" id="IPR004154">
    <property type="entry name" value="Anticodon-bd"/>
</dbReference>
<dbReference type="InterPro" id="IPR036621">
    <property type="entry name" value="Anticodon-bd_dom_sf"/>
</dbReference>
<dbReference type="InterPro" id="IPR012675">
    <property type="entry name" value="Beta-grasp_dom_sf"/>
</dbReference>
<dbReference type="InterPro" id="IPR004095">
    <property type="entry name" value="TGS"/>
</dbReference>
<dbReference type="InterPro" id="IPR012676">
    <property type="entry name" value="TGS-like"/>
</dbReference>
<dbReference type="InterPro" id="IPR002320">
    <property type="entry name" value="Thr-tRNA-ligase_IIa"/>
</dbReference>
<dbReference type="InterPro" id="IPR018163">
    <property type="entry name" value="Thr/Ala-tRNA-synth_IIc_edit"/>
</dbReference>
<dbReference type="InterPro" id="IPR047246">
    <property type="entry name" value="ThrRS_anticodon"/>
</dbReference>
<dbReference type="InterPro" id="IPR033728">
    <property type="entry name" value="ThrRS_core"/>
</dbReference>
<dbReference type="InterPro" id="IPR012947">
    <property type="entry name" value="tRNA_SAD"/>
</dbReference>
<dbReference type="NCBIfam" id="TIGR00418">
    <property type="entry name" value="thrS"/>
    <property type="match status" value="1"/>
</dbReference>
<dbReference type="PANTHER" id="PTHR11451:SF44">
    <property type="entry name" value="THREONINE--TRNA LIGASE, CHLOROPLASTIC_MITOCHONDRIAL 2"/>
    <property type="match status" value="1"/>
</dbReference>
<dbReference type="PANTHER" id="PTHR11451">
    <property type="entry name" value="THREONINE-TRNA LIGASE"/>
    <property type="match status" value="1"/>
</dbReference>
<dbReference type="Pfam" id="PF03129">
    <property type="entry name" value="HGTP_anticodon"/>
    <property type="match status" value="1"/>
</dbReference>
<dbReference type="Pfam" id="PF02824">
    <property type="entry name" value="TGS"/>
    <property type="match status" value="1"/>
</dbReference>
<dbReference type="Pfam" id="PF00587">
    <property type="entry name" value="tRNA-synt_2b"/>
    <property type="match status" value="1"/>
</dbReference>
<dbReference type="Pfam" id="PF07973">
    <property type="entry name" value="tRNA_SAD"/>
    <property type="match status" value="1"/>
</dbReference>
<dbReference type="PRINTS" id="PR01047">
    <property type="entry name" value="TRNASYNTHTHR"/>
</dbReference>
<dbReference type="SMART" id="SM00863">
    <property type="entry name" value="tRNA_SAD"/>
    <property type="match status" value="1"/>
</dbReference>
<dbReference type="SUPFAM" id="SSF52954">
    <property type="entry name" value="Class II aaRS ABD-related"/>
    <property type="match status" value="1"/>
</dbReference>
<dbReference type="SUPFAM" id="SSF55681">
    <property type="entry name" value="Class II aaRS and biotin synthetases"/>
    <property type="match status" value="1"/>
</dbReference>
<dbReference type="SUPFAM" id="SSF81271">
    <property type="entry name" value="TGS-like"/>
    <property type="match status" value="1"/>
</dbReference>
<dbReference type="SUPFAM" id="SSF55186">
    <property type="entry name" value="ThrRS/AlaRS common domain"/>
    <property type="match status" value="1"/>
</dbReference>
<dbReference type="PROSITE" id="PS50862">
    <property type="entry name" value="AA_TRNA_LIGASE_II"/>
    <property type="match status" value="1"/>
</dbReference>
<dbReference type="PROSITE" id="PS51880">
    <property type="entry name" value="TGS"/>
    <property type="match status" value="1"/>
</dbReference>
<reference key="1">
    <citation type="journal article" date="2008" name="J. Bacteriol.">
        <title>Comparative genome sequence analysis of multidrug-resistant Acinetobacter baumannii.</title>
        <authorList>
            <person name="Adams M.D."/>
            <person name="Goglin K."/>
            <person name="Molyneaux N."/>
            <person name="Hujer K.M."/>
            <person name="Lavender H."/>
            <person name="Jamison J.J."/>
            <person name="MacDonald I.J."/>
            <person name="Martin K.M."/>
            <person name="Russo T."/>
            <person name="Campagnari A.A."/>
            <person name="Hujer A.M."/>
            <person name="Bonomo R.A."/>
            <person name="Gill S.R."/>
        </authorList>
    </citation>
    <scope>NUCLEOTIDE SEQUENCE [LARGE SCALE GENOMIC DNA]</scope>
    <source>
        <strain>AB0057</strain>
    </source>
</reference>
<comment type="function">
    <text evidence="1">Catalyzes the attachment of threonine to tRNA(Thr) in a two-step reaction: L-threonine is first activated by ATP to form Thr-AMP and then transferred to the acceptor end of tRNA(Thr). Also edits incorrectly charged L-seryl-tRNA(Thr).</text>
</comment>
<comment type="catalytic activity">
    <reaction evidence="1">
        <text>tRNA(Thr) + L-threonine + ATP = L-threonyl-tRNA(Thr) + AMP + diphosphate + H(+)</text>
        <dbReference type="Rhea" id="RHEA:24624"/>
        <dbReference type="Rhea" id="RHEA-COMP:9670"/>
        <dbReference type="Rhea" id="RHEA-COMP:9704"/>
        <dbReference type="ChEBI" id="CHEBI:15378"/>
        <dbReference type="ChEBI" id="CHEBI:30616"/>
        <dbReference type="ChEBI" id="CHEBI:33019"/>
        <dbReference type="ChEBI" id="CHEBI:57926"/>
        <dbReference type="ChEBI" id="CHEBI:78442"/>
        <dbReference type="ChEBI" id="CHEBI:78534"/>
        <dbReference type="ChEBI" id="CHEBI:456215"/>
        <dbReference type="EC" id="6.1.1.3"/>
    </reaction>
</comment>
<comment type="cofactor">
    <cofactor evidence="1">
        <name>Zn(2+)</name>
        <dbReference type="ChEBI" id="CHEBI:29105"/>
    </cofactor>
    <text evidence="1">Binds 1 zinc ion per subunit.</text>
</comment>
<comment type="subunit">
    <text evidence="1">Homodimer.</text>
</comment>
<comment type="subcellular location">
    <subcellularLocation>
        <location evidence="1">Cytoplasm</location>
    </subcellularLocation>
</comment>
<comment type="similarity">
    <text evidence="1">Belongs to the class-II aminoacyl-tRNA synthetase family.</text>
</comment>
<organism>
    <name type="scientific">Acinetobacter baumannii (strain AB0057)</name>
    <dbReference type="NCBI Taxonomy" id="480119"/>
    <lineage>
        <taxon>Bacteria</taxon>
        <taxon>Pseudomonadati</taxon>
        <taxon>Pseudomonadota</taxon>
        <taxon>Gammaproteobacteria</taxon>
        <taxon>Moraxellales</taxon>
        <taxon>Moraxellaceae</taxon>
        <taxon>Acinetobacter</taxon>
        <taxon>Acinetobacter calcoaceticus/baumannii complex</taxon>
    </lineage>
</organism>
<keyword id="KW-0030">Aminoacyl-tRNA synthetase</keyword>
<keyword id="KW-0067">ATP-binding</keyword>
<keyword id="KW-0963">Cytoplasm</keyword>
<keyword id="KW-0436">Ligase</keyword>
<keyword id="KW-0479">Metal-binding</keyword>
<keyword id="KW-0547">Nucleotide-binding</keyword>
<keyword id="KW-0648">Protein biosynthesis</keyword>
<keyword id="KW-0694">RNA-binding</keyword>
<keyword id="KW-0820">tRNA-binding</keyword>
<keyword id="KW-0862">Zinc</keyword>
<name>SYT_ACIB5</name>
<gene>
    <name evidence="1" type="primary">thrS</name>
    <name type="ordered locus">AB57_0695</name>
</gene>